<feature type="chain" id="PRO_1000063719" description="3-isopropylmalate dehydratase small subunit">
    <location>
        <begin position="1"/>
        <end position="195"/>
    </location>
</feature>
<keyword id="KW-0028">Amino-acid biosynthesis</keyword>
<keyword id="KW-0100">Branched-chain amino acid biosynthesis</keyword>
<keyword id="KW-0432">Leucine biosynthesis</keyword>
<keyword id="KW-0456">Lyase</keyword>
<keyword id="KW-1185">Reference proteome</keyword>
<organism>
    <name type="scientific">Koribacter versatilis (strain Ellin345)</name>
    <dbReference type="NCBI Taxonomy" id="204669"/>
    <lineage>
        <taxon>Bacteria</taxon>
        <taxon>Pseudomonadati</taxon>
        <taxon>Acidobacteriota</taxon>
        <taxon>Terriglobia</taxon>
        <taxon>Terriglobales</taxon>
        <taxon>Candidatus Korobacteraceae</taxon>
        <taxon>Candidatus Korobacter</taxon>
    </lineage>
</organism>
<proteinExistence type="inferred from homology"/>
<evidence type="ECO:0000255" key="1">
    <source>
        <dbReference type="HAMAP-Rule" id="MF_01031"/>
    </source>
</evidence>
<sequence length="195" mass="21438">MKAFRVHTGIVAPLVRPNVDTDQIIPKQFLKRIERTGFGPFLFFDWRFDEAGNPKSDFVLNQSGYKGASILVGGKNFGCGSSREHAPWAIEDFGFRVVIAPTFADIFHNNCRNSGVLAIVTSQENVDAIAARAEKNPGYQLTVDLEKGTISGADGLSIDFEVDGFTRRCFLEGLDDIGLTLRHADAIADYEKAHA</sequence>
<gene>
    <name evidence="1" type="primary">leuD</name>
    <name type="ordered locus">Acid345_2915</name>
</gene>
<protein>
    <recommendedName>
        <fullName evidence="1">3-isopropylmalate dehydratase small subunit</fullName>
        <ecNumber evidence="1">4.2.1.33</ecNumber>
    </recommendedName>
    <alternativeName>
        <fullName evidence="1">Alpha-IPM isomerase</fullName>
        <shortName evidence="1">IPMI</shortName>
    </alternativeName>
    <alternativeName>
        <fullName evidence="1">Isopropylmalate isomerase</fullName>
    </alternativeName>
</protein>
<comment type="function">
    <text evidence="1">Catalyzes the isomerization between 2-isopropylmalate and 3-isopropylmalate, via the formation of 2-isopropylmaleate.</text>
</comment>
<comment type="catalytic activity">
    <reaction evidence="1">
        <text>(2R,3S)-3-isopropylmalate = (2S)-2-isopropylmalate</text>
        <dbReference type="Rhea" id="RHEA:32287"/>
        <dbReference type="ChEBI" id="CHEBI:1178"/>
        <dbReference type="ChEBI" id="CHEBI:35121"/>
        <dbReference type="EC" id="4.2.1.33"/>
    </reaction>
</comment>
<comment type="pathway">
    <text evidence="1">Amino-acid biosynthesis; L-leucine biosynthesis; L-leucine from 3-methyl-2-oxobutanoate: step 2/4.</text>
</comment>
<comment type="subunit">
    <text evidence="1">Heterodimer of LeuC and LeuD.</text>
</comment>
<comment type="similarity">
    <text evidence="1">Belongs to the LeuD family. LeuD type 1 subfamily.</text>
</comment>
<name>LEUD_KORVE</name>
<dbReference type="EC" id="4.2.1.33" evidence="1"/>
<dbReference type="EMBL" id="CP000360">
    <property type="protein sequence ID" value="ABF41916.1"/>
    <property type="molecule type" value="Genomic_DNA"/>
</dbReference>
<dbReference type="RefSeq" id="WP_011523717.1">
    <property type="nucleotide sequence ID" value="NC_008009.1"/>
</dbReference>
<dbReference type="SMR" id="Q1IMI4"/>
<dbReference type="STRING" id="204669.Acid345_2915"/>
<dbReference type="EnsemblBacteria" id="ABF41916">
    <property type="protein sequence ID" value="ABF41916"/>
    <property type="gene ID" value="Acid345_2915"/>
</dbReference>
<dbReference type="KEGG" id="aba:Acid345_2915"/>
<dbReference type="eggNOG" id="COG0066">
    <property type="taxonomic scope" value="Bacteria"/>
</dbReference>
<dbReference type="HOGENOM" id="CLU_081378_0_3_0"/>
<dbReference type="OrthoDB" id="9777465at2"/>
<dbReference type="UniPathway" id="UPA00048">
    <property type="reaction ID" value="UER00071"/>
</dbReference>
<dbReference type="Proteomes" id="UP000002432">
    <property type="component" value="Chromosome"/>
</dbReference>
<dbReference type="GO" id="GO:0009316">
    <property type="term" value="C:3-isopropylmalate dehydratase complex"/>
    <property type="evidence" value="ECO:0007669"/>
    <property type="project" value="InterPro"/>
</dbReference>
<dbReference type="GO" id="GO:0003861">
    <property type="term" value="F:3-isopropylmalate dehydratase activity"/>
    <property type="evidence" value="ECO:0007669"/>
    <property type="project" value="UniProtKB-UniRule"/>
</dbReference>
<dbReference type="GO" id="GO:0009098">
    <property type="term" value="P:L-leucine biosynthetic process"/>
    <property type="evidence" value="ECO:0007669"/>
    <property type="project" value="UniProtKB-UniRule"/>
</dbReference>
<dbReference type="CDD" id="cd01577">
    <property type="entry name" value="IPMI_Swivel"/>
    <property type="match status" value="1"/>
</dbReference>
<dbReference type="FunFam" id="3.20.19.10:FF:000003">
    <property type="entry name" value="3-isopropylmalate dehydratase small subunit"/>
    <property type="match status" value="1"/>
</dbReference>
<dbReference type="Gene3D" id="3.20.19.10">
    <property type="entry name" value="Aconitase, domain 4"/>
    <property type="match status" value="1"/>
</dbReference>
<dbReference type="HAMAP" id="MF_01031">
    <property type="entry name" value="LeuD_type1"/>
    <property type="match status" value="1"/>
</dbReference>
<dbReference type="InterPro" id="IPR004431">
    <property type="entry name" value="3-IsopropMal_deHydase_ssu"/>
</dbReference>
<dbReference type="InterPro" id="IPR015928">
    <property type="entry name" value="Aconitase/3IPM_dehydase_swvl"/>
</dbReference>
<dbReference type="InterPro" id="IPR000573">
    <property type="entry name" value="AconitaseA/IPMdHydase_ssu_swvl"/>
</dbReference>
<dbReference type="InterPro" id="IPR033940">
    <property type="entry name" value="IPMI_Swivel"/>
</dbReference>
<dbReference type="InterPro" id="IPR050075">
    <property type="entry name" value="LeuD"/>
</dbReference>
<dbReference type="NCBIfam" id="TIGR00171">
    <property type="entry name" value="leuD"/>
    <property type="match status" value="1"/>
</dbReference>
<dbReference type="NCBIfam" id="NF002458">
    <property type="entry name" value="PRK01641.1"/>
    <property type="match status" value="1"/>
</dbReference>
<dbReference type="PANTHER" id="PTHR43345:SF5">
    <property type="entry name" value="3-ISOPROPYLMALATE DEHYDRATASE SMALL SUBUNIT"/>
    <property type="match status" value="1"/>
</dbReference>
<dbReference type="PANTHER" id="PTHR43345">
    <property type="entry name" value="3-ISOPROPYLMALATE DEHYDRATASE SMALL SUBUNIT 2-RELATED-RELATED"/>
    <property type="match status" value="1"/>
</dbReference>
<dbReference type="Pfam" id="PF00694">
    <property type="entry name" value="Aconitase_C"/>
    <property type="match status" value="1"/>
</dbReference>
<dbReference type="SUPFAM" id="SSF52016">
    <property type="entry name" value="LeuD/IlvD-like"/>
    <property type="match status" value="1"/>
</dbReference>
<accession>Q1IMI4</accession>
<reference key="1">
    <citation type="journal article" date="2009" name="Appl. Environ. Microbiol.">
        <title>Three genomes from the phylum Acidobacteria provide insight into the lifestyles of these microorganisms in soils.</title>
        <authorList>
            <person name="Ward N.L."/>
            <person name="Challacombe J.F."/>
            <person name="Janssen P.H."/>
            <person name="Henrissat B."/>
            <person name="Coutinho P.M."/>
            <person name="Wu M."/>
            <person name="Xie G."/>
            <person name="Haft D.H."/>
            <person name="Sait M."/>
            <person name="Badger J."/>
            <person name="Barabote R.D."/>
            <person name="Bradley B."/>
            <person name="Brettin T.S."/>
            <person name="Brinkac L.M."/>
            <person name="Bruce D."/>
            <person name="Creasy T."/>
            <person name="Daugherty S.C."/>
            <person name="Davidsen T.M."/>
            <person name="DeBoy R.T."/>
            <person name="Detter J.C."/>
            <person name="Dodson R.J."/>
            <person name="Durkin A.S."/>
            <person name="Ganapathy A."/>
            <person name="Gwinn-Giglio M."/>
            <person name="Han C.S."/>
            <person name="Khouri H."/>
            <person name="Kiss H."/>
            <person name="Kothari S.P."/>
            <person name="Madupu R."/>
            <person name="Nelson K.E."/>
            <person name="Nelson W.C."/>
            <person name="Paulsen I."/>
            <person name="Penn K."/>
            <person name="Ren Q."/>
            <person name="Rosovitz M.J."/>
            <person name="Selengut J.D."/>
            <person name="Shrivastava S."/>
            <person name="Sullivan S.A."/>
            <person name="Tapia R."/>
            <person name="Thompson L.S."/>
            <person name="Watkins K.L."/>
            <person name="Yang Q."/>
            <person name="Yu C."/>
            <person name="Zafar N."/>
            <person name="Zhou L."/>
            <person name="Kuske C.R."/>
        </authorList>
    </citation>
    <scope>NUCLEOTIDE SEQUENCE [LARGE SCALE GENOMIC DNA]</scope>
    <source>
        <strain>Ellin345</strain>
    </source>
</reference>